<protein>
    <recommendedName>
        <fullName evidence="1">Endoribonuclease YbeY</fullName>
        <ecNumber evidence="1">3.1.-.-</ecNumber>
    </recommendedName>
</protein>
<dbReference type="EC" id="3.1.-.-" evidence="1"/>
<dbReference type="EMBL" id="CP000681">
    <property type="protein sequence ID" value="ABP76576.1"/>
    <property type="molecule type" value="Genomic_DNA"/>
</dbReference>
<dbReference type="SMR" id="A4Y9E3"/>
<dbReference type="STRING" id="319224.Sputcn32_2857"/>
<dbReference type="KEGG" id="spc:Sputcn32_2857"/>
<dbReference type="eggNOG" id="COG0319">
    <property type="taxonomic scope" value="Bacteria"/>
</dbReference>
<dbReference type="HOGENOM" id="CLU_106710_0_1_6"/>
<dbReference type="GO" id="GO:0005737">
    <property type="term" value="C:cytoplasm"/>
    <property type="evidence" value="ECO:0007669"/>
    <property type="project" value="UniProtKB-SubCell"/>
</dbReference>
<dbReference type="GO" id="GO:0004222">
    <property type="term" value="F:metalloendopeptidase activity"/>
    <property type="evidence" value="ECO:0007669"/>
    <property type="project" value="InterPro"/>
</dbReference>
<dbReference type="GO" id="GO:0004521">
    <property type="term" value="F:RNA endonuclease activity"/>
    <property type="evidence" value="ECO:0007669"/>
    <property type="project" value="UniProtKB-UniRule"/>
</dbReference>
<dbReference type="GO" id="GO:0008270">
    <property type="term" value="F:zinc ion binding"/>
    <property type="evidence" value="ECO:0007669"/>
    <property type="project" value="UniProtKB-UniRule"/>
</dbReference>
<dbReference type="GO" id="GO:0006364">
    <property type="term" value="P:rRNA processing"/>
    <property type="evidence" value="ECO:0007669"/>
    <property type="project" value="UniProtKB-UniRule"/>
</dbReference>
<dbReference type="Gene3D" id="3.40.390.30">
    <property type="entry name" value="Metalloproteases ('zincins'), catalytic domain"/>
    <property type="match status" value="1"/>
</dbReference>
<dbReference type="HAMAP" id="MF_00009">
    <property type="entry name" value="Endoribonucl_YbeY"/>
    <property type="match status" value="1"/>
</dbReference>
<dbReference type="InterPro" id="IPR023091">
    <property type="entry name" value="MetalPrtase_cat_dom_sf_prd"/>
</dbReference>
<dbReference type="InterPro" id="IPR002036">
    <property type="entry name" value="YbeY"/>
</dbReference>
<dbReference type="InterPro" id="IPR020549">
    <property type="entry name" value="YbeY_CS"/>
</dbReference>
<dbReference type="NCBIfam" id="TIGR00043">
    <property type="entry name" value="rRNA maturation RNase YbeY"/>
    <property type="match status" value="1"/>
</dbReference>
<dbReference type="PANTHER" id="PTHR46986">
    <property type="entry name" value="ENDORIBONUCLEASE YBEY, CHLOROPLASTIC"/>
    <property type="match status" value="1"/>
</dbReference>
<dbReference type="PANTHER" id="PTHR46986:SF1">
    <property type="entry name" value="ENDORIBONUCLEASE YBEY, CHLOROPLASTIC"/>
    <property type="match status" value="1"/>
</dbReference>
<dbReference type="Pfam" id="PF02130">
    <property type="entry name" value="YbeY"/>
    <property type="match status" value="1"/>
</dbReference>
<dbReference type="SUPFAM" id="SSF55486">
    <property type="entry name" value="Metalloproteases ('zincins'), catalytic domain"/>
    <property type="match status" value="1"/>
</dbReference>
<dbReference type="PROSITE" id="PS01306">
    <property type="entry name" value="UPF0054"/>
    <property type="match status" value="1"/>
</dbReference>
<organism>
    <name type="scientific">Shewanella putrefaciens (strain CN-32 / ATCC BAA-453)</name>
    <dbReference type="NCBI Taxonomy" id="319224"/>
    <lineage>
        <taxon>Bacteria</taxon>
        <taxon>Pseudomonadati</taxon>
        <taxon>Pseudomonadota</taxon>
        <taxon>Gammaproteobacteria</taxon>
        <taxon>Alteromonadales</taxon>
        <taxon>Shewanellaceae</taxon>
        <taxon>Shewanella</taxon>
    </lineage>
</organism>
<accession>A4Y9E3</accession>
<reference key="1">
    <citation type="submission" date="2007-04" db="EMBL/GenBank/DDBJ databases">
        <title>Complete sequence of Shewanella putrefaciens CN-32.</title>
        <authorList>
            <consortium name="US DOE Joint Genome Institute"/>
            <person name="Copeland A."/>
            <person name="Lucas S."/>
            <person name="Lapidus A."/>
            <person name="Barry K."/>
            <person name="Detter J.C."/>
            <person name="Glavina del Rio T."/>
            <person name="Hammon N."/>
            <person name="Israni S."/>
            <person name="Dalin E."/>
            <person name="Tice H."/>
            <person name="Pitluck S."/>
            <person name="Chain P."/>
            <person name="Malfatti S."/>
            <person name="Shin M."/>
            <person name="Vergez L."/>
            <person name="Schmutz J."/>
            <person name="Larimer F."/>
            <person name="Land M."/>
            <person name="Hauser L."/>
            <person name="Kyrpides N."/>
            <person name="Mikhailova N."/>
            <person name="Romine M.F."/>
            <person name="Fredrickson J."/>
            <person name="Tiedje J."/>
            <person name="Richardson P."/>
        </authorList>
    </citation>
    <scope>NUCLEOTIDE SEQUENCE [LARGE SCALE GENOMIC DNA]</scope>
    <source>
        <strain>CN-32 / ATCC BAA-453</strain>
    </source>
</reference>
<feature type="chain" id="PRO_1000000743" description="Endoribonuclease YbeY">
    <location>
        <begin position="1"/>
        <end position="153"/>
    </location>
</feature>
<feature type="binding site" evidence="1">
    <location>
        <position position="114"/>
    </location>
    <ligand>
        <name>Zn(2+)</name>
        <dbReference type="ChEBI" id="CHEBI:29105"/>
        <note>catalytic</note>
    </ligand>
</feature>
<feature type="binding site" evidence="1">
    <location>
        <position position="118"/>
    </location>
    <ligand>
        <name>Zn(2+)</name>
        <dbReference type="ChEBI" id="CHEBI:29105"/>
        <note>catalytic</note>
    </ligand>
</feature>
<feature type="binding site" evidence="1">
    <location>
        <position position="124"/>
    </location>
    <ligand>
        <name>Zn(2+)</name>
        <dbReference type="ChEBI" id="CHEBI:29105"/>
        <note>catalytic</note>
    </ligand>
</feature>
<sequence length="153" mass="17320">MSLELALDVQYATTSDWLPTEEQLMLWAKTAIGNGMDRAELTIRIVDSRESQMLNSTYRGKDKPTNVLSFPFEAPAEIELPLLGDLVICAAVVENEAREQNKTLEAHWAHMVVHGCLHLLGYDHIEDEEAEEMESLETQLIESLGFTNPYKEQ</sequence>
<name>YBEY_SHEPC</name>
<comment type="function">
    <text evidence="1">Single strand-specific metallo-endoribonuclease involved in late-stage 70S ribosome quality control and in maturation of the 3' terminus of the 16S rRNA.</text>
</comment>
<comment type="cofactor">
    <cofactor evidence="1">
        <name>Zn(2+)</name>
        <dbReference type="ChEBI" id="CHEBI:29105"/>
    </cofactor>
    <text evidence="1">Binds 1 zinc ion.</text>
</comment>
<comment type="subcellular location">
    <subcellularLocation>
        <location evidence="1">Cytoplasm</location>
    </subcellularLocation>
</comment>
<comment type="similarity">
    <text evidence="1">Belongs to the endoribonuclease YbeY family.</text>
</comment>
<keyword id="KW-0963">Cytoplasm</keyword>
<keyword id="KW-0255">Endonuclease</keyword>
<keyword id="KW-0378">Hydrolase</keyword>
<keyword id="KW-0479">Metal-binding</keyword>
<keyword id="KW-0540">Nuclease</keyword>
<keyword id="KW-0690">Ribosome biogenesis</keyword>
<keyword id="KW-0698">rRNA processing</keyword>
<keyword id="KW-0862">Zinc</keyword>
<gene>
    <name evidence="1" type="primary">ybeY</name>
    <name type="ordered locus">Sputcn32_2857</name>
</gene>
<evidence type="ECO:0000255" key="1">
    <source>
        <dbReference type="HAMAP-Rule" id="MF_00009"/>
    </source>
</evidence>
<proteinExistence type="inferred from homology"/>